<sequence>MGDKLRLSIGILGNGASLLLYTAPIVTFSRVFKKKSTEEFSCFPYVMTLFNCLIYTWYGLPIVSHLWENLPLVTINGVGILLESIFIFIYFYYASPKEKIKVGVTFVPVIVGFGLTTAISALVFDDHRHRKSFVGSVGLVASISMYGSPLVVMKKVIETRSVEYMPFYLSFFSFLASSLWLAYGLLSHDLFLASPNMVATPLGILQLILYFKYKNKKDLAPTTMVITKRNDHDDKNKATLEFVVDVDRNSDTNEKNSNNASSI</sequence>
<reference key="1">
    <citation type="submission" date="1999-04" db="EMBL/GenBank/DDBJ databases">
        <title>Structural analysis of Arabidopsis thaliana chromosome 5. XI.</title>
        <authorList>
            <person name="Kaneko T."/>
            <person name="Katoh T."/>
            <person name="Asamizu E."/>
            <person name="Sato S."/>
            <person name="Nakamura Y."/>
            <person name="Kotani H."/>
            <person name="Tabata S."/>
        </authorList>
    </citation>
    <scope>NUCLEOTIDE SEQUENCE [LARGE SCALE GENOMIC DNA]</scope>
    <source>
        <strain>cv. Columbia</strain>
    </source>
</reference>
<reference key="2">
    <citation type="journal article" date="2017" name="Plant J.">
        <title>Araport11: a complete reannotation of the Arabidopsis thaliana reference genome.</title>
        <authorList>
            <person name="Cheng C.Y."/>
            <person name="Krishnakumar V."/>
            <person name="Chan A.P."/>
            <person name="Thibaud-Nissen F."/>
            <person name="Schobel S."/>
            <person name="Town C.D."/>
        </authorList>
    </citation>
    <scope>GENOME REANNOTATION</scope>
    <source>
        <strain>cv. Columbia</strain>
    </source>
</reference>
<reference key="3">
    <citation type="journal article" date="2003" name="Science">
        <title>Empirical analysis of transcriptional activity in the Arabidopsis genome.</title>
        <authorList>
            <person name="Yamada K."/>
            <person name="Lim J."/>
            <person name="Dale J.M."/>
            <person name="Chen H."/>
            <person name="Shinn P."/>
            <person name="Palm C.J."/>
            <person name="Southwick A.M."/>
            <person name="Wu H.C."/>
            <person name="Kim C.J."/>
            <person name="Nguyen M."/>
            <person name="Pham P.K."/>
            <person name="Cheuk R.F."/>
            <person name="Karlin-Newmann G."/>
            <person name="Liu S.X."/>
            <person name="Lam B."/>
            <person name="Sakano H."/>
            <person name="Wu T."/>
            <person name="Yu G."/>
            <person name="Miranda M."/>
            <person name="Quach H.L."/>
            <person name="Tripp M."/>
            <person name="Chang C.H."/>
            <person name="Lee J.M."/>
            <person name="Toriumi M.J."/>
            <person name="Chan M.M."/>
            <person name="Tang C.C."/>
            <person name="Onodera C.S."/>
            <person name="Deng J.M."/>
            <person name="Akiyama K."/>
            <person name="Ansari Y."/>
            <person name="Arakawa T."/>
            <person name="Banh J."/>
            <person name="Banno F."/>
            <person name="Bowser L."/>
            <person name="Brooks S.Y."/>
            <person name="Carninci P."/>
            <person name="Chao Q."/>
            <person name="Choy N."/>
            <person name="Enju A."/>
            <person name="Goldsmith A.D."/>
            <person name="Gurjal M."/>
            <person name="Hansen N.F."/>
            <person name="Hayashizaki Y."/>
            <person name="Johnson-Hopson C."/>
            <person name="Hsuan V.W."/>
            <person name="Iida K."/>
            <person name="Karnes M."/>
            <person name="Khan S."/>
            <person name="Koesema E."/>
            <person name="Ishida J."/>
            <person name="Jiang P.X."/>
            <person name="Jones T."/>
            <person name="Kawai J."/>
            <person name="Kamiya A."/>
            <person name="Meyers C."/>
            <person name="Nakajima M."/>
            <person name="Narusaka M."/>
            <person name="Seki M."/>
            <person name="Sakurai T."/>
            <person name="Satou M."/>
            <person name="Tamse R."/>
            <person name="Vaysberg M."/>
            <person name="Wallender E.K."/>
            <person name="Wong C."/>
            <person name="Yamamura Y."/>
            <person name="Yuan S."/>
            <person name="Shinozaki K."/>
            <person name="Davis R.W."/>
            <person name="Theologis A."/>
            <person name="Ecker J.R."/>
        </authorList>
    </citation>
    <scope>NUCLEOTIDE SEQUENCE [LARGE SCALE MRNA]</scope>
    <source>
        <strain>cv. Columbia</strain>
    </source>
</reference>
<reference key="4">
    <citation type="submission" date="2004-09" db="EMBL/GenBank/DDBJ databases">
        <title>Large-scale analysis of RIKEN Arabidopsis full-length (RAFL) cDNAs.</title>
        <authorList>
            <person name="Totoki Y."/>
            <person name="Seki M."/>
            <person name="Ishida J."/>
            <person name="Nakajima M."/>
            <person name="Enju A."/>
            <person name="Kamiya A."/>
            <person name="Narusaka M."/>
            <person name="Shin-i T."/>
            <person name="Nakagawa M."/>
            <person name="Sakamoto N."/>
            <person name="Oishi K."/>
            <person name="Kohara Y."/>
            <person name="Kobayashi M."/>
            <person name="Toyoda A."/>
            <person name="Sakaki Y."/>
            <person name="Sakurai T."/>
            <person name="Iida K."/>
            <person name="Akiyama K."/>
            <person name="Satou M."/>
            <person name="Toyoda T."/>
            <person name="Konagaya A."/>
            <person name="Carninci P."/>
            <person name="Kawai J."/>
            <person name="Hayashizaki Y."/>
            <person name="Shinozaki K."/>
        </authorList>
    </citation>
    <scope>NUCLEOTIDE SEQUENCE [LARGE SCALE MRNA]</scope>
    <source>
        <strain>cv. Columbia</strain>
    </source>
</reference>
<reference key="5">
    <citation type="journal article" date="2010" name="Nature">
        <title>Sugar transporters for intercellular exchange and nutrition of pathogens.</title>
        <authorList>
            <person name="Chen L.-Q."/>
            <person name="Hou B.-H."/>
            <person name="Lalonde S."/>
            <person name="Takanaga H."/>
            <person name="Hartung M.L."/>
            <person name="Qu X.-Q."/>
            <person name="Guo W.-J."/>
            <person name="Kim J.-G."/>
            <person name="Underwood W."/>
            <person name="Chaudhuri B."/>
            <person name="Chermak D."/>
            <person name="Antony G."/>
            <person name="White F.F."/>
            <person name="Somerville S.C."/>
            <person name="Mudgett M.B."/>
            <person name="Frommer W.B."/>
        </authorList>
    </citation>
    <scope>GENE FAMILY</scope>
    <scope>NOMENCLATURE</scope>
    <source>
        <strain>cv. Columbia</strain>
    </source>
</reference>
<reference key="6">
    <citation type="journal article" date="2013" name="Proc. Natl. Acad. Sci. U.S.A.">
        <title>Functional role of oligomerization for bacterial and plant SWEET sugar transporter family.</title>
        <authorList>
            <person name="Xuan Y.H."/>
            <person name="Hu Y.B."/>
            <person name="Chen L.-Q."/>
            <person name="Sosso D."/>
            <person name="Ducat D.C."/>
            <person name="Hou B.-H."/>
            <person name="Frommer W.B."/>
        </authorList>
    </citation>
    <scope>INTERACTION WITH SWEET11; SWEET13 AND SWEET17</scope>
</reference>
<feature type="chain" id="PRO_0000404104" description="Bidirectional sugar transporter SWEET3">
    <location>
        <begin position="1"/>
        <end position="263"/>
    </location>
</feature>
<feature type="topological domain" description="Extracellular" evidence="2">
    <location>
        <begin position="1"/>
        <end position="7"/>
    </location>
</feature>
<feature type="transmembrane region" description="Helical; Name=1" evidence="2">
    <location>
        <begin position="8"/>
        <end position="28"/>
    </location>
</feature>
<feature type="topological domain" description="Cytoplasmic" evidence="2">
    <location>
        <begin position="29"/>
        <end position="42"/>
    </location>
</feature>
<feature type="transmembrane region" description="Helical; Name=2" evidence="2">
    <location>
        <begin position="43"/>
        <end position="63"/>
    </location>
</feature>
<feature type="topological domain" description="Extracellular" evidence="2">
    <location>
        <begin position="64"/>
        <end position="71"/>
    </location>
</feature>
<feature type="transmembrane region" description="Helical; Name=3" evidence="2">
    <location>
        <begin position="72"/>
        <end position="92"/>
    </location>
</feature>
<feature type="topological domain" description="Cytoplasmic" evidence="2">
    <location>
        <begin position="93"/>
        <end position="103"/>
    </location>
</feature>
<feature type="transmembrane region" description="Helical; Name=4" evidence="2">
    <location>
        <begin position="104"/>
        <end position="124"/>
    </location>
</feature>
<feature type="topological domain" description="Extracellular" evidence="2">
    <location>
        <begin position="125"/>
        <end position="132"/>
    </location>
</feature>
<feature type="transmembrane region" description="Helical; Name=5" evidence="2">
    <location>
        <begin position="133"/>
        <end position="153"/>
    </location>
</feature>
<feature type="topological domain" description="Cytoplasmic" evidence="2">
    <location>
        <begin position="154"/>
        <end position="165"/>
    </location>
</feature>
<feature type="transmembrane region" description="Helical; Name=6" evidence="2">
    <location>
        <begin position="166"/>
        <end position="186"/>
    </location>
</feature>
<feature type="topological domain" description="Extracellular" evidence="2">
    <location>
        <begin position="187"/>
        <end position="190"/>
    </location>
</feature>
<feature type="transmembrane region" description="Helical; Name=7" evidence="2">
    <location>
        <begin position="191"/>
        <end position="211"/>
    </location>
</feature>
<feature type="topological domain" description="Cytoplasmic" evidence="2">
    <location>
        <begin position="212"/>
        <end position="263"/>
    </location>
</feature>
<feature type="domain" description="MtN3/slv 1">
    <location>
        <begin position="9"/>
        <end position="97"/>
    </location>
</feature>
<feature type="domain" description="MtN3/slv 2">
    <location>
        <begin position="133"/>
        <end position="217"/>
    </location>
</feature>
<name>SWET3_ARATH</name>
<gene>
    <name evidence="4" type="primary">SWEET3</name>
    <name type="ordered locus">At5g53190</name>
    <name type="ORF">MFH8.13</name>
</gene>
<evidence type="ECO:0000250" key="1">
    <source>
        <dbReference type="UniProtKB" id="Q8L9J7"/>
    </source>
</evidence>
<evidence type="ECO:0000255" key="2"/>
<evidence type="ECO:0000269" key="3">
    <source>
    </source>
</evidence>
<evidence type="ECO:0000303" key="4">
    <source>
    </source>
</evidence>
<evidence type="ECO:0000305" key="5"/>
<protein>
    <recommendedName>
        <fullName evidence="4">Bidirectional sugar transporter SWEET3</fullName>
        <shortName evidence="4">AtSWEET3</shortName>
    </recommendedName>
    <alternativeName>
        <fullName evidence="4">Protein SUGARS WILL EVENTUALLY BE EXPORTED TRANSPORTERS 3</fullName>
    </alternativeName>
</protein>
<dbReference type="EMBL" id="AB025622">
    <property type="protein sequence ID" value="BAB08422.1"/>
    <property type="status" value="ALT_SEQ"/>
    <property type="molecule type" value="Genomic_DNA"/>
</dbReference>
<dbReference type="EMBL" id="CP002688">
    <property type="protein sequence ID" value="AED96320.1"/>
    <property type="molecule type" value="Genomic_DNA"/>
</dbReference>
<dbReference type="EMBL" id="BT010416">
    <property type="protein sequence ID" value="AAQ62417.1"/>
    <property type="molecule type" value="mRNA"/>
</dbReference>
<dbReference type="EMBL" id="AK176340">
    <property type="protein sequence ID" value="BAD44103.1"/>
    <property type="molecule type" value="mRNA"/>
</dbReference>
<dbReference type="RefSeq" id="NP_200131.2">
    <property type="nucleotide sequence ID" value="NM_124698.4"/>
</dbReference>
<dbReference type="SMR" id="Q6NQN5"/>
<dbReference type="BioGRID" id="20645">
    <property type="interactions" value="6"/>
</dbReference>
<dbReference type="FunCoup" id="Q6NQN5">
    <property type="interactions" value="471"/>
</dbReference>
<dbReference type="IntAct" id="Q6NQN5">
    <property type="interactions" value="3"/>
</dbReference>
<dbReference type="STRING" id="3702.Q6NQN5"/>
<dbReference type="iPTMnet" id="Q6NQN5"/>
<dbReference type="PaxDb" id="3702-AT5G53190.1"/>
<dbReference type="EnsemblPlants" id="AT5G53190.1">
    <property type="protein sequence ID" value="AT5G53190.1"/>
    <property type="gene ID" value="AT5G53190"/>
</dbReference>
<dbReference type="GeneID" id="835400"/>
<dbReference type="Gramene" id="AT5G53190.1">
    <property type="protein sequence ID" value="AT5G53190.1"/>
    <property type="gene ID" value="AT5G53190"/>
</dbReference>
<dbReference type="KEGG" id="ath:AT5G53190"/>
<dbReference type="Araport" id="AT5G53190"/>
<dbReference type="TAIR" id="AT5G53190">
    <property type="gene designation" value="SWEET3"/>
</dbReference>
<dbReference type="eggNOG" id="KOG1623">
    <property type="taxonomic scope" value="Eukaryota"/>
</dbReference>
<dbReference type="HOGENOM" id="CLU_048643_1_0_1"/>
<dbReference type="InParanoid" id="Q6NQN5"/>
<dbReference type="OMA" id="CSLWLRY"/>
<dbReference type="OrthoDB" id="409725at2759"/>
<dbReference type="PhylomeDB" id="Q6NQN5"/>
<dbReference type="PRO" id="PR:Q6NQN5"/>
<dbReference type="Proteomes" id="UP000006548">
    <property type="component" value="Chromosome 5"/>
</dbReference>
<dbReference type="ExpressionAtlas" id="Q6NQN5">
    <property type="expression patterns" value="baseline and differential"/>
</dbReference>
<dbReference type="GO" id="GO:0005886">
    <property type="term" value="C:plasma membrane"/>
    <property type="evidence" value="ECO:0000250"/>
    <property type="project" value="UniProtKB"/>
</dbReference>
<dbReference type="GO" id="GO:0051119">
    <property type="term" value="F:sugar transmembrane transporter activity"/>
    <property type="evidence" value="ECO:0000250"/>
    <property type="project" value="UniProtKB"/>
</dbReference>
<dbReference type="FunFam" id="1.20.1280.290:FF:000001">
    <property type="entry name" value="Bidirectional sugar transporter SWEET"/>
    <property type="match status" value="1"/>
</dbReference>
<dbReference type="FunFam" id="1.20.1280.290:FF:000002">
    <property type="entry name" value="Bidirectional sugar transporter SWEET"/>
    <property type="match status" value="1"/>
</dbReference>
<dbReference type="Gene3D" id="1.20.1280.290">
    <property type="match status" value="2"/>
</dbReference>
<dbReference type="InterPro" id="IPR047664">
    <property type="entry name" value="SWEET"/>
</dbReference>
<dbReference type="InterPro" id="IPR004316">
    <property type="entry name" value="SWEET_rpt"/>
</dbReference>
<dbReference type="PANTHER" id="PTHR10791:SF28">
    <property type="entry name" value="BIDIRECTIONAL SUGAR TRANSPORTER SWEET3"/>
    <property type="match status" value="1"/>
</dbReference>
<dbReference type="PANTHER" id="PTHR10791">
    <property type="entry name" value="RAG1-ACTIVATING PROTEIN 1"/>
    <property type="match status" value="1"/>
</dbReference>
<dbReference type="Pfam" id="PF03083">
    <property type="entry name" value="MtN3_slv"/>
    <property type="match status" value="2"/>
</dbReference>
<accession>Q6NQN5</accession>
<accession>Q9FGL8</accession>
<organism>
    <name type="scientific">Arabidopsis thaliana</name>
    <name type="common">Mouse-ear cress</name>
    <dbReference type="NCBI Taxonomy" id="3702"/>
    <lineage>
        <taxon>Eukaryota</taxon>
        <taxon>Viridiplantae</taxon>
        <taxon>Streptophyta</taxon>
        <taxon>Embryophyta</taxon>
        <taxon>Tracheophyta</taxon>
        <taxon>Spermatophyta</taxon>
        <taxon>Magnoliopsida</taxon>
        <taxon>eudicotyledons</taxon>
        <taxon>Gunneridae</taxon>
        <taxon>Pentapetalae</taxon>
        <taxon>rosids</taxon>
        <taxon>malvids</taxon>
        <taxon>Brassicales</taxon>
        <taxon>Brassicaceae</taxon>
        <taxon>Camelineae</taxon>
        <taxon>Arabidopsis</taxon>
    </lineage>
</organism>
<keyword id="KW-1003">Cell membrane</keyword>
<keyword id="KW-0472">Membrane</keyword>
<keyword id="KW-1185">Reference proteome</keyword>
<keyword id="KW-0677">Repeat</keyword>
<keyword id="KW-0762">Sugar transport</keyword>
<keyword id="KW-0812">Transmembrane</keyword>
<keyword id="KW-1133">Transmembrane helix</keyword>
<keyword id="KW-0813">Transport</keyword>
<comment type="function">
    <text evidence="1">Mediates both low-affinity uptake and efflux of sugar across the plasma membrane.</text>
</comment>
<comment type="subunit">
    <text evidence="3">Forms heterooligomers with SWEET11, SWEET13 and SWEET17.</text>
</comment>
<comment type="subcellular location">
    <subcellularLocation>
        <location evidence="1">Cell membrane</location>
        <topology evidence="1">Multi-pass membrane protein</topology>
    </subcellularLocation>
</comment>
<comment type="similarity">
    <text evidence="5">Belongs to the SWEET sugar transporter family.</text>
</comment>
<comment type="sequence caution" evidence="5">
    <conflict type="erroneous gene model prediction">
        <sequence resource="EMBL-CDS" id="BAB08422"/>
    </conflict>
</comment>
<proteinExistence type="evidence at protein level"/>